<reference key="1">
    <citation type="journal article" date="1996" name="DNA Res.">
        <title>A 718-kb DNA sequence of the Escherichia coli K-12 genome corresponding to the 12.7-28.0 min region on the linkage map.</title>
        <authorList>
            <person name="Oshima T."/>
            <person name="Aiba H."/>
            <person name="Baba T."/>
            <person name="Fujita K."/>
            <person name="Hayashi K."/>
            <person name="Honjo A."/>
            <person name="Ikemoto K."/>
            <person name="Inada T."/>
            <person name="Itoh T."/>
            <person name="Kajihara M."/>
            <person name="Kanai K."/>
            <person name="Kashimoto K."/>
            <person name="Kimura S."/>
            <person name="Kitagawa M."/>
            <person name="Makino K."/>
            <person name="Masuda S."/>
            <person name="Miki T."/>
            <person name="Mizobuchi K."/>
            <person name="Mori H."/>
            <person name="Motomura K."/>
            <person name="Nakamura Y."/>
            <person name="Nashimoto H."/>
            <person name="Nishio Y."/>
            <person name="Saito N."/>
            <person name="Sampei G."/>
            <person name="Seki Y."/>
            <person name="Tagami H."/>
            <person name="Takemoto K."/>
            <person name="Wada C."/>
            <person name="Yamamoto Y."/>
            <person name="Yano M."/>
            <person name="Horiuchi T."/>
        </authorList>
    </citation>
    <scope>NUCLEOTIDE SEQUENCE [LARGE SCALE GENOMIC DNA]</scope>
    <source>
        <strain>K12 / W3110 / ATCC 27325 / DSM 5911</strain>
    </source>
</reference>
<reference key="2">
    <citation type="journal article" date="1997" name="Science">
        <title>The complete genome sequence of Escherichia coli K-12.</title>
        <authorList>
            <person name="Blattner F.R."/>
            <person name="Plunkett G. III"/>
            <person name="Bloch C.A."/>
            <person name="Perna N.T."/>
            <person name="Burland V."/>
            <person name="Riley M."/>
            <person name="Collado-Vides J."/>
            <person name="Glasner J.D."/>
            <person name="Rode C.K."/>
            <person name="Mayhew G.F."/>
            <person name="Gregor J."/>
            <person name="Davis N.W."/>
            <person name="Kirkpatrick H.A."/>
            <person name="Goeden M.A."/>
            <person name="Rose D.J."/>
            <person name="Mau B."/>
            <person name="Shao Y."/>
        </authorList>
    </citation>
    <scope>NUCLEOTIDE SEQUENCE [LARGE SCALE GENOMIC DNA]</scope>
    <source>
        <strain>K12 / MG1655 / ATCC 47076</strain>
    </source>
</reference>
<reference key="3">
    <citation type="journal article" date="2006" name="Mol. Syst. Biol.">
        <title>Highly accurate genome sequences of Escherichia coli K-12 strains MG1655 and W3110.</title>
        <authorList>
            <person name="Hayashi K."/>
            <person name="Morooka N."/>
            <person name="Yamamoto Y."/>
            <person name="Fujita K."/>
            <person name="Isono K."/>
            <person name="Choi S."/>
            <person name="Ohtsubo E."/>
            <person name="Baba T."/>
            <person name="Wanner B.L."/>
            <person name="Mori H."/>
            <person name="Horiuchi T."/>
        </authorList>
    </citation>
    <scope>NUCLEOTIDE SEQUENCE [LARGE SCALE GENOMIC DNA]</scope>
    <source>
        <strain>K12 / W3110 / ATCC 27325 / DSM 5911</strain>
    </source>
</reference>
<reference key="4">
    <citation type="journal article" date="2006" name="Appl. Environ. Microbiol.">
        <title>YliH (BssR) and YceP (BssS) regulate Escherichia coli K-12 biofilm formation by influencing cell signaling.</title>
        <authorList>
            <person name="Domka J."/>
            <person name="Lee J."/>
            <person name="Wood T.K."/>
        </authorList>
    </citation>
    <scope>FUNCTION</scope>
    <scope>DISRUPTION PHENOTYPE</scope>
    <source>
        <strain>K12 / BW25113</strain>
    </source>
</reference>
<keyword id="KW-1185">Reference proteome</keyword>
<name>BSSR_ECOLI</name>
<organism>
    <name type="scientific">Escherichia coli (strain K12)</name>
    <dbReference type="NCBI Taxonomy" id="83333"/>
    <lineage>
        <taxon>Bacteria</taxon>
        <taxon>Pseudomonadati</taxon>
        <taxon>Pseudomonadota</taxon>
        <taxon>Gammaproteobacteria</taxon>
        <taxon>Enterobacterales</taxon>
        <taxon>Enterobacteriaceae</taxon>
        <taxon>Escherichia</taxon>
    </lineage>
</organism>
<protein>
    <recommendedName>
        <fullName>Biofilm regulator BssR</fullName>
    </recommendedName>
</protein>
<dbReference type="EMBL" id="U00096">
    <property type="protein sequence ID" value="AAC73923.1"/>
    <property type="molecule type" value="Genomic_DNA"/>
</dbReference>
<dbReference type="EMBL" id="AP009048">
    <property type="protein sequence ID" value="BAA35531.1"/>
    <property type="molecule type" value="Genomic_DNA"/>
</dbReference>
<dbReference type="PIR" id="D64821">
    <property type="entry name" value="D64821"/>
</dbReference>
<dbReference type="RefSeq" id="NP_415357.1">
    <property type="nucleotide sequence ID" value="NC_000913.3"/>
</dbReference>
<dbReference type="RefSeq" id="WP_000497137.1">
    <property type="nucleotide sequence ID" value="NZ_STEB01000019.1"/>
</dbReference>
<dbReference type="BioGRID" id="4261844">
    <property type="interactions" value="6"/>
</dbReference>
<dbReference type="FunCoup" id="P0AAY1">
    <property type="interactions" value="6"/>
</dbReference>
<dbReference type="STRING" id="511145.b0836"/>
<dbReference type="PaxDb" id="511145-b0836"/>
<dbReference type="EnsemblBacteria" id="AAC73923">
    <property type="protein sequence ID" value="AAC73923"/>
    <property type="gene ID" value="b0836"/>
</dbReference>
<dbReference type="GeneID" id="93776586"/>
<dbReference type="GeneID" id="945466"/>
<dbReference type="KEGG" id="ecj:JW0820"/>
<dbReference type="KEGG" id="eco:b0836"/>
<dbReference type="KEGG" id="ecoc:C3026_05235"/>
<dbReference type="PATRIC" id="fig|1411691.4.peg.1442"/>
<dbReference type="EchoBASE" id="EB3252"/>
<dbReference type="eggNOG" id="ENOG5030IAT">
    <property type="taxonomic scope" value="Bacteria"/>
</dbReference>
<dbReference type="HOGENOM" id="CLU_161265_0_0_6"/>
<dbReference type="InParanoid" id="P0AAY1"/>
<dbReference type="OMA" id="NDHLRDN"/>
<dbReference type="OrthoDB" id="6630475at2"/>
<dbReference type="BioCyc" id="EcoCyc:G6436-MONOMER"/>
<dbReference type="PRO" id="PR:P0AAY1"/>
<dbReference type="Proteomes" id="UP000000625">
    <property type="component" value="Chromosome"/>
</dbReference>
<dbReference type="GO" id="GO:0010468">
    <property type="term" value="P:regulation of gene expression"/>
    <property type="evidence" value="ECO:0000270"/>
    <property type="project" value="EcoCyc"/>
</dbReference>
<dbReference type="GO" id="GO:1900190">
    <property type="term" value="P:regulation of single-species biofilm formation"/>
    <property type="evidence" value="ECO:0000315"/>
    <property type="project" value="EcoCyc"/>
</dbReference>
<dbReference type="InterPro" id="IPR020359">
    <property type="entry name" value="Biofilm_regulator_BssR"/>
</dbReference>
<dbReference type="NCBIfam" id="NF008959">
    <property type="entry name" value="PRK12302.1"/>
    <property type="match status" value="1"/>
</dbReference>
<dbReference type="Pfam" id="PF10799">
    <property type="entry name" value="YliH"/>
    <property type="match status" value="1"/>
</dbReference>
<sequence>MFVDRQRIDLLNRLIDARVDLAAYVQLRKAKGYMSVSESNHLRDNFFKLNRELHDKSLRLNLHLDQEEWSALHHAEEALATAAVCLMSGHHDCPTVITVNADKLENCLMSLTLSIQSLQKHAMLEKA</sequence>
<accession>P0AAY1</accession>
<accession>P75803</accession>
<gene>
    <name type="primary">bssR</name>
    <name type="synonym">yliH</name>
    <name type="ordered locus">b0836</name>
    <name type="ordered locus">JW0820</name>
</gene>
<proteinExistence type="predicted"/>
<comment type="function">
    <text evidence="1">Represses biofilm formation in M9C glu and LB glu media but not in M9C and LB media. Seems to act as a global regulator of several genes involved in catabolite repression and stress response and regulation of the uptake and export of signaling pathways. Could be involved the regulation of indole as well as uptake and export of AI-2 through a cAMP-dependent pathway.</text>
</comment>
<comment type="disruption phenotype">
    <text evidence="1">Cells show increased biofilm formation when glucose is present in the medium. In a continuous-flow system with M9C medium supplemented with glucose, the biofilm had a 290-fold greater biomass, a 2700-fold greater thickness and a 31-fold increased surface coverage than the wild-type.</text>
</comment>
<feature type="chain" id="PRO_0000168732" description="Biofilm regulator BssR">
    <location>
        <begin position="1"/>
        <end position="127"/>
    </location>
</feature>
<evidence type="ECO:0000269" key="1">
    <source>
    </source>
</evidence>